<feature type="chain" id="PRO_0000449953" description="Inactive uridine phosphorylase B">
    <location>
        <begin position="1"/>
        <end position="296"/>
    </location>
</feature>
<feature type="helix" evidence="8">
    <location>
        <begin position="10"/>
        <end position="14"/>
    </location>
</feature>
<feature type="turn" evidence="8">
    <location>
        <begin position="21"/>
        <end position="24"/>
    </location>
</feature>
<feature type="helix" evidence="8">
    <location>
        <begin position="32"/>
        <end position="36"/>
    </location>
</feature>
<feature type="strand" evidence="8">
    <location>
        <begin position="41"/>
        <end position="46"/>
    </location>
</feature>
<feature type="helix" evidence="8">
    <location>
        <begin position="48"/>
        <end position="62"/>
    </location>
</feature>
<feature type="strand" evidence="8">
    <location>
        <begin position="76"/>
        <end position="78"/>
    </location>
</feature>
<feature type="strand" evidence="8">
    <location>
        <begin position="80"/>
        <end position="83"/>
    </location>
</feature>
<feature type="strand" evidence="8">
    <location>
        <begin position="86"/>
        <end position="90"/>
    </location>
</feature>
<feature type="helix" evidence="8">
    <location>
        <begin position="95"/>
        <end position="111"/>
    </location>
</feature>
<feature type="strand" evidence="8">
    <location>
        <begin position="118"/>
        <end position="130"/>
    </location>
</feature>
<feature type="strand" evidence="8">
    <location>
        <begin position="135"/>
        <end position="142"/>
    </location>
</feature>
<feature type="strand" evidence="8">
    <location>
        <begin position="148"/>
        <end position="154"/>
    </location>
</feature>
<feature type="strand" evidence="8">
    <location>
        <begin position="157"/>
        <end position="162"/>
    </location>
</feature>
<feature type="helix" evidence="8">
    <location>
        <begin position="167"/>
        <end position="179"/>
    </location>
</feature>
<feature type="strand" evidence="8">
    <location>
        <begin position="186"/>
        <end position="193"/>
    </location>
</feature>
<feature type="helix" evidence="8">
    <location>
        <begin position="199"/>
        <end position="201"/>
    </location>
</feature>
<feature type="helix" evidence="8">
    <location>
        <begin position="213"/>
        <end position="225"/>
    </location>
</feature>
<feature type="strand" evidence="8">
    <location>
        <begin position="228"/>
        <end position="234"/>
    </location>
</feature>
<feature type="helix" evidence="8">
    <location>
        <begin position="235"/>
        <end position="245"/>
    </location>
</feature>
<feature type="strand" evidence="8">
    <location>
        <begin position="248"/>
        <end position="258"/>
    </location>
</feature>
<feature type="turn" evidence="8">
    <location>
        <begin position="259"/>
        <end position="261"/>
    </location>
</feature>
<feature type="helix" evidence="8">
    <location>
        <begin position="269"/>
        <end position="289"/>
    </location>
</feature>
<accession>G4VGH9</accession>
<protein>
    <recommendedName>
        <fullName evidence="2">Inactive uridine phosphorylase B</fullName>
        <shortName evidence="2">SmUPb</shortName>
    </recommendedName>
</protein>
<proteinExistence type="evidence at protein level"/>
<keyword id="KW-0002">3D-structure</keyword>
<keyword id="KW-1185">Reference proteome</keyword>
<sequence>MATVQPIVNSHLSELDEDVFHHFGFTTKSFDFKEKFGDVKFVCVCGSSGRIHNFAISMAKLAGLALPVENIAGSHARFVLYKVDHILFADHGIGIPSTLILMHEVTKLLYYAGCKDVLFIRLGTSDGLGVKPGTIVLSDRCVNTKLEPYNELCILGKPVRRQTKVDSNAVNELKKLSENLSLKCSVVVGGTITANDFYEELGRLNGSICTFSKEEKLAFLQSVYDHGIRNMEMEGAAITSHCNLTGHRAILVCVTVVNRLETDEVTTSTDEFKLFEQLPGQLVGEYLKRNNGIIVR</sequence>
<gene>
    <name evidence="4" type="primary">UPPB</name>
    <name evidence="5" type="ORF">Smp_082420</name>
</gene>
<comment type="subunit">
    <text evidence="1">Homodimer.</text>
</comment>
<comment type="similarity">
    <text evidence="3">Belongs to the PNP/UDP phosphorylase family.</text>
</comment>
<comment type="caution">
    <text evidence="1">Although this protein has high similarity to uridine phosphorylases, it has no detectable catalytic activity. It contains substitutions at Gly-126 and Gln-201, two conserved sites which are known to be important for uridine binding.</text>
</comment>
<dbReference type="EMBL" id="HE601626">
    <property type="protein sequence ID" value="CCD78100.1"/>
    <property type="molecule type" value="Genomic_DNA"/>
</dbReference>
<dbReference type="RefSeq" id="XP_018650717.1">
    <property type="nucleotide sequence ID" value="XM_018798871.1"/>
</dbReference>
<dbReference type="PDB" id="5CYF">
    <property type="method" value="X-ray"/>
    <property type="resolution" value="1.98 A"/>
    <property type="chains" value="A/B/C=1-296"/>
</dbReference>
<dbReference type="PDB" id="5CYG">
    <property type="method" value="X-ray"/>
    <property type="resolution" value="2.02 A"/>
    <property type="chains" value="A/B=1-296"/>
</dbReference>
<dbReference type="PDBsum" id="5CYF"/>
<dbReference type="PDBsum" id="5CYG"/>
<dbReference type="SMR" id="G4VGH9"/>
<dbReference type="FunCoup" id="G4VGH9">
    <property type="interactions" value="171"/>
</dbReference>
<dbReference type="GeneID" id="8343369"/>
<dbReference type="KEGG" id="smm:Smp_082420"/>
<dbReference type="CTD" id="8343369"/>
<dbReference type="eggNOG" id="KOG3728">
    <property type="taxonomic scope" value="Eukaryota"/>
</dbReference>
<dbReference type="HOGENOM" id="CLU_054104_0_0_1"/>
<dbReference type="InParanoid" id="G4VGH9"/>
<dbReference type="OrthoDB" id="204058at2759"/>
<dbReference type="PhylomeDB" id="G4VGH9"/>
<dbReference type="BRENDA" id="2.4.2.3">
    <property type="organism ID" value="5608"/>
</dbReference>
<dbReference type="EvolutionaryTrace" id="G4VGH9"/>
<dbReference type="Proteomes" id="UP000008854">
    <property type="component" value="Chromosome 3"/>
</dbReference>
<dbReference type="ExpressionAtlas" id="G4VGH9">
    <property type="expression patterns" value="baseline"/>
</dbReference>
<dbReference type="GO" id="GO:0005829">
    <property type="term" value="C:cytosol"/>
    <property type="evidence" value="ECO:0007669"/>
    <property type="project" value="TreeGrafter"/>
</dbReference>
<dbReference type="GO" id="GO:0003824">
    <property type="term" value="F:catalytic activity"/>
    <property type="evidence" value="ECO:0007669"/>
    <property type="project" value="InterPro"/>
</dbReference>
<dbReference type="GO" id="GO:0042802">
    <property type="term" value="F:identical protein binding"/>
    <property type="evidence" value="ECO:0000353"/>
    <property type="project" value="UniProtKB"/>
</dbReference>
<dbReference type="GO" id="GO:0009116">
    <property type="term" value="P:nucleoside metabolic process"/>
    <property type="evidence" value="ECO:0007669"/>
    <property type="project" value="InterPro"/>
</dbReference>
<dbReference type="GO" id="GO:0009166">
    <property type="term" value="P:nucleotide catabolic process"/>
    <property type="evidence" value="ECO:0007669"/>
    <property type="project" value="InterPro"/>
</dbReference>
<dbReference type="CDD" id="cd17763">
    <property type="entry name" value="UP_hUPP-like"/>
    <property type="match status" value="1"/>
</dbReference>
<dbReference type="Gene3D" id="3.40.50.1580">
    <property type="entry name" value="Nucleoside phosphorylase domain"/>
    <property type="match status" value="1"/>
</dbReference>
<dbReference type="InterPro" id="IPR000845">
    <property type="entry name" value="Nucleoside_phosphorylase_d"/>
</dbReference>
<dbReference type="InterPro" id="IPR035994">
    <property type="entry name" value="Nucleoside_phosphorylase_sf"/>
</dbReference>
<dbReference type="InterPro" id="IPR010059">
    <property type="entry name" value="Uridine_phosphorylase_euk"/>
</dbReference>
<dbReference type="NCBIfam" id="TIGR01719">
    <property type="entry name" value="euk_UDPppase"/>
    <property type="match status" value="1"/>
</dbReference>
<dbReference type="PANTHER" id="PTHR43691:SF11">
    <property type="entry name" value="FI09636P-RELATED"/>
    <property type="match status" value="1"/>
</dbReference>
<dbReference type="PANTHER" id="PTHR43691">
    <property type="entry name" value="URIDINE PHOSPHORYLASE"/>
    <property type="match status" value="1"/>
</dbReference>
<dbReference type="Pfam" id="PF01048">
    <property type="entry name" value="PNP_UDP_1"/>
    <property type="match status" value="1"/>
</dbReference>
<dbReference type="SUPFAM" id="SSF53167">
    <property type="entry name" value="Purine and uridine phosphorylases"/>
    <property type="match status" value="1"/>
</dbReference>
<organism evidence="5">
    <name type="scientific">Schistosoma mansoni</name>
    <name type="common">Blood fluke</name>
    <dbReference type="NCBI Taxonomy" id="6183"/>
    <lineage>
        <taxon>Eukaryota</taxon>
        <taxon>Metazoa</taxon>
        <taxon>Spiralia</taxon>
        <taxon>Lophotrochozoa</taxon>
        <taxon>Platyhelminthes</taxon>
        <taxon>Trematoda</taxon>
        <taxon>Digenea</taxon>
        <taxon>Strigeidida</taxon>
        <taxon>Schistosomatoidea</taxon>
        <taxon>Schistosomatidae</taxon>
        <taxon>Schistosoma</taxon>
    </lineage>
</organism>
<name>UPPB_SCHMA</name>
<reference evidence="5" key="1">
    <citation type="journal article" date="2012" name="PLoS Negl. Trop. Dis.">
        <title>A systematically improved high quality genome and transcriptome of the human blood fluke Schistosoma mansoni.</title>
        <authorList>
            <person name="Protasio A.V."/>
            <person name="Tsai I.J."/>
            <person name="Babbage A."/>
            <person name="Nichol S."/>
            <person name="Hunt M."/>
            <person name="Aslett M.A."/>
            <person name="De Silva N."/>
            <person name="Velarde G.S."/>
            <person name="Anderson T.J."/>
            <person name="Clark R.C."/>
            <person name="Davidson C."/>
            <person name="Dillon G.P."/>
            <person name="Holroyd N.E."/>
            <person name="LoVerde P.T."/>
            <person name="Lloyd C."/>
            <person name="McQuillan J."/>
            <person name="Oliveira G."/>
            <person name="Otto T.D."/>
            <person name="Parker-Manuel S.J."/>
            <person name="Quail M.A."/>
            <person name="Wilson R.A."/>
            <person name="Zerlotini A."/>
            <person name="Dunne D.W."/>
            <person name="Berriman M."/>
        </authorList>
    </citation>
    <scope>NUCLEOTIDE SEQUENCE [GENOMIC DNA]</scope>
    <source>
        <strain evidence="5">Puerto Rican</strain>
    </source>
</reference>
<reference evidence="6 7" key="2">
    <citation type="journal article" date="2016" name="Biochimie">
        <title>Analysis of two Schistosoma mansoni uridine phosphorylases isoforms suggests the emergence of a protein with a non-canonical function.</title>
        <authorList>
            <person name="da Silva Neto A.M."/>
            <person name="Torini de Souza J.R."/>
            <person name="Romanelo L."/>
            <person name="Cassago A."/>
            <person name="Serrao V.H."/>
            <person name="DeMarco R."/>
            <person name="Brandao-Neto J."/>
            <person name="Garratt R.C."/>
            <person name="Pereira H.D."/>
        </authorList>
    </citation>
    <scope>X-RAY CRYSTALLOGRAPHY (1.98 ANGSTROMS)</scope>
    <scope>SUBUNIT</scope>
</reference>
<evidence type="ECO:0000269" key="1">
    <source>
    </source>
</evidence>
<evidence type="ECO:0000303" key="2">
    <source>
    </source>
</evidence>
<evidence type="ECO:0000305" key="3"/>
<evidence type="ECO:0000305" key="4">
    <source>
    </source>
</evidence>
<evidence type="ECO:0000312" key="5">
    <source>
        <dbReference type="EMBL" id="CCD78100.1"/>
    </source>
</evidence>
<evidence type="ECO:0007744" key="6">
    <source>
        <dbReference type="PDB" id="5CYF"/>
    </source>
</evidence>
<evidence type="ECO:0007744" key="7">
    <source>
        <dbReference type="PDB" id="5CYG"/>
    </source>
</evidence>
<evidence type="ECO:0007829" key="8">
    <source>
        <dbReference type="PDB" id="5CYF"/>
    </source>
</evidence>